<name>HIS6_STAA2</name>
<reference key="1">
    <citation type="submission" date="2007-06" db="EMBL/GenBank/DDBJ databases">
        <title>Complete sequence of chromosome of Staphylococcus aureus subsp. aureus JH1.</title>
        <authorList>
            <consortium name="US DOE Joint Genome Institute"/>
            <person name="Copeland A."/>
            <person name="Lucas S."/>
            <person name="Lapidus A."/>
            <person name="Barry K."/>
            <person name="Detter J.C."/>
            <person name="Glavina del Rio T."/>
            <person name="Hammon N."/>
            <person name="Israni S."/>
            <person name="Dalin E."/>
            <person name="Tice H."/>
            <person name="Pitluck S."/>
            <person name="Chain P."/>
            <person name="Malfatti S."/>
            <person name="Shin M."/>
            <person name="Vergez L."/>
            <person name="Schmutz J."/>
            <person name="Larimer F."/>
            <person name="Land M."/>
            <person name="Hauser L."/>
            <person name="Kyrpides N."/>
            <person name="Ivanova N."/>
            <person name="Tomasz A."/>
            <person name="Richardson P."/>
        </authorList>
    </citation>
    <scope>NUCLEOTIDE SEQUENCE [LARGE SCALE GENOMIC DNA]</scope>
    <source>
        <strain>JH1</strain>
    </source>
</reference>
<comment type="function">
    <text evidence="1">IGPS catalyzes the conversion of PRFAR and glutamine to IGP, AICAR and glutamate. The HisF subunit catalyzes the cyclization activity that produces IGP and AICAR from PRFAR using the ammonia provided by the HisH subunit.</text>
</comment>
<comment type="catalytic activity">
    <reaction evidence="1">
        <text>5-[(5-phospho-1-deoxy-D-ribulos-1-ylimino)methylamino]-1-(5-phospho-beta-D-ribosyl)imidazole-4-carboxamide + L-glutamine = D-erythro-1-(imidazol-4-yl)glycerol 3-phosphate + 5-amino-1-(5-phospho-beta-D-ribosyl)imidazole-4-carboxamide + L-glutamate + H(+)</text>
        <dbReference type="Rhea" id="RHEA:24793"/>
        <dbReference type="ChEBI" id="CHEBI:15378"/>
        <dbReference type="ChEBI" id="CHEBI:29985"/>
        <dbReference type="ChEBI" id="CHEBI:58278"/>
        <dbReference type="ChEBI" id="CHEBI:58359"/>
        <dbReference type="ChEBI" id="CHEBI:58475"/>
        <dbReference type="ChEBI" id="CHEBI:58525"/>
        <dbReference type="EC" id="4.3.2.10"/>
    </reaction>
</comment>
<comment type="pathway">
    <text evidence="1">Amino-acid biosynthesis; L-histidine biosynthesis; L-histidine from 5-phospho-alpha-D-ribose 1-diphosphate: step 5/9.</text>
</comment>
<comment type="subunit">
    <text evidence="1">Heterodimer of HisH and HisF.</text>
</comment>
<comment type="subcellular location">
    <subcellularLocation>
        <location evidence="1">Cytoplasm</location>
    </subcellularLocation>
</comment>
<comment type="similarity">
    <text evidence="1">Belongs to the HisA/HisF family.</text>
</comment>
<gene>
    <name evidence="1" type="primary">hisF</name>
    <name type="ordered locus">SaurJH1_2754</name>
</gene>
<feature type="chain" id="PRO_1000084083" description="Imidazole glycerol phosphate synthase subunit HisF">
    <location>
        <begin position="1"/>
        <end position="252"/>
    </location>
</feature>
<feature type="active site" evidence="1">
    <location>
        <position position="11"/>
    </location>
</feature>
<feature type="active site" evidence="1">
    <location>
        <position position="130"/>
    </location>
</feature>
<keyword id="KW-0028">Amino-acid biosynthesis</keyword>
<keyword id="KW-0963">Cytoplasm</keyword>
<keyword id="KW-0368">Histidine biosynthesis</keyword>
<keyword id="KW-0456">Lyase</keyword>
<sequence length="252" mass="27530">MIKKRIIPCLDVKDGRVVKGIQFKGLRDIGNPVDLAIYYNEAGADELVFLDISKTEEGHSLMLEVIEQTASRLFIPLTVGGGIQSLDDITQLLNHGADKVSLNSSALKNPQLIKQASDKFGRQCICIAIDSYYDPERKAHYCCTHGGKKMTNIKVYDWVQQVEQLGAGELLVTSMGHDGMKQGFDIEHLAKIKSLVNIPIIASGGGGNAQHFVELFNQTDVSAGLAASILHDRETTVQSIKEVIRQGGIAVR</sequence>
<evidence type="ECO:0000255" key="1">
    <source>
        <dbReference type="HAMAP-Rule" id="MF_01013"/>
    </source>
</evidence>
<protein>
    <recommendedName>
        <fullName evidence="1">Imidazole glycerol phosphate synthase subunit HisF</fullName>
        <ecNumber evidence="1">4.3.2.10</ecNumber>
    </recommendedName>
    <alternativeName>
        <fullName evidence="1">IGP synthase cyclase subunit</fullName>
    </alternativeName>
    <alternativeName>
        <fullName evidence="1">IGP synthase subunit HisF</fullName>
    </alternativeName>
    <alternativeName>
        <fullName evidence="1">ImGP synthase subunit HisF</fullName>
        <shortName evidence="1">IGPS subunit HisF</shortName>
    </alternativeName>
</protein>
<proteinExistence type="inferred from homology"/>
<organism>
    <name type="scientific">Staphylococcus aureus (strain JH1)</name>
    <dbReference type="NCBI Taxonomy" id="359787"/>
    <lineage>
        <taxon>Bacteria</taxon>
        <taxon>Bacillati</taxon>
        <taxon>Bacillota</taxon>
        <taxon>Bacilli</taxon>
        <taxon>Bacillales</taxon>
        <taxon>Staphylococcaceae</taxon>
        <taxon>Staphylococcus</taxon>
    </lineage>
</organism>
<accession>A6U558</accession>
<dbReference type="EC" id="4.3.2.10" evidence="1"/>
<dbReference type="EMBL" id="CP000736">
    <property type="protein sequence ID" value="ABR53576.1"/>
    <property type="molecule type" value="Genomic_DNA"/>
</dbReference>
<dbReference type="SMR" id="A6U558"/>
<dbReference type="KEGG" id="sah:SaurJH1_2754"/>
<dbReference type="HOGENOM" id="CLU_048577_4_0_9"/>
<dbReference type="UniPathway" id="UPA00031">
    <property type="reaction ID" value="UER00010"/>
</dbReference>
<dbReference type="GO" id="GO:0005737">
    <property type="term" value="C:cytoplasm"/>
    <property type="evidence" value="ECO:0007669"/>
    <property type="project" value="UniProtKB-SubCell"/>
</dbReference>
<dbReference type="GO" id="GO:0000107">
    <property type="term" value="F:imidazoleglycerol-phosphate synthase activity"/>
    <property type="evidence" value="ECO:0007669"/>
    <property type="project" value="UniProtKB-UniRule"/>
</dbReference>
<dbReference type="GO" id="GO:0016829">
    <property type="term" value="F:lyase activity"/>
    <property type="evidence" value="ECO:0007669"/>
    <property type="project" value="UniProtKB-KW"/>
</dbReference>
<dbReference type="GO" id="GO:0000105">
    <property type="term" value="P:L-histidine biosynthetic process"/>
    <property type="evidence" value="ECO:0007669"/>
    <property type="project" value="UniProtKB-UniRule"/>
</dbReference>
<dbReference type="CDD" id="cd04731">
    <property type="entry name" value="HisF"/>
    <property type="match status" value="1"/>
</dbReference>
<dbReference type="FunFam" id="3.20.20.70:FF:000462">
    <property type="entry name" value="Multifunctional fusion protein"/>
    <property type="match status" value="1"/>
</dbReference>
<dbReference type="Gene3D" id="3.20.20.70">
    <property type="entry name" value="Aldolase class I"/>
    <property type="match status" value="1"/>
</dbReference>
<dbReference type="HAMAP" id="MF_01013">
    <property type="entry name" value="HisF"/>
    <property type="match status" value="1"/>
</dbReference>
<dbReference type="InterPro" id="IPR013785">
    <property type="entry name" value="Aldolase_TIM"/>
</dbReference>
<dbReference type="InterPro" id="IPR006062">
    <property type="entry name" value="His_biosynth"/>
</dbReference>
<dbReference type="InterPro" id="IPR004651">
    <property type="entry name" value="HisF"/>
</dbReference>
<dbReference type="InterPro" id="IPR050064">
    <property type="entry name" value="IGPS_HisA/HisF"/>
</dbReference>
<dbReference type="InterPro" id="IPR011060">
    <property type="entry name" value="RibuloseP-bd_barrel"/>
</dbReference>
<dbReference type="NCBIfam" id="TIGR00735">
    <property type="entry name" value="hisF"/>
    <property type="match status" value="1"/>
</dbReference>
<dbReference type="PANTHER" id="PTHR21235:SF2">
    <property type="entry name" value="IMIDAZOLE GLYCEROL PHOSPHATE SYNTHASE HISHF"/>
    <property type="match status" value="1"/>
</dbReference>
<dbReference type="PANTHER" id="PTHR21235">
    <property type="entry name" value="IMIDAZOLE GLYCEROL PHOSPHATE SYNTHASE SUBUNIT HISF/H IGP SYNTHASE SUBUNIT HISF/H"/>
    <property type="match status" value="1"/>
</dbReference>
<dbReference type="Pfam" id="PF00977">
    <property type="entry name" value="His_biosynth"/>
    <property type="match status" value="1"/>
</dbReference>
<dbReference type="SUPFAM" id="SSF51366">
    <property type="entry name" value="Ribulose-phoshate binding barrel"/>
    <property type="match status" value="1"/>
</dbReference>